<name>ATPD_BACFR</name>
<keyword id="KW-0066">ATP synthesis</keyword>
<keyword id="KW-0997">Cell inner membrane</keyword>
<keyword id="KW-1003">Cell membrane</keyword>
<keyword id="KW-0139">CF(1)</keyword>
<keyword id="KW-0375">Hydrogen ion transport</keyword>
<keyword id="KW-0406">Ion transport</keyword>
<keyword id="KW-0472">Membrane</keyword>
<keyword id="KW-0813">Transport</keyword>
<reference key="1">
    <citation type="journal article" date="2004" name="Proc. Natl. Acad. Sci. U.S.A.">
        <title>Genomic analysis of Bacteroides fragilis reveals extensive DNA inversions regulating cell surface adaptation.</title>
        <authorList>
            <person name="Kuwahara T."/>
            <person name="Yamashita A."/>
            <person name="Hirakawa H."/>
            <person name="Nakayama H."/>
            <person name="Toh H."/>
            <person name="Okada N."/>
            <person name="Kuhara S."/>
            <person name="Hattori M."/>
            <person name="Hayashi T."/>
            <person name="Ohnishi Y."/>
        </authorList>
    </citation>
    <scope>NUCLEOTIDE SEQUENCE [LARGE SCALE GENOMIC DNA]</scope>
    <source>
        <strain>YCH46</strain>
    </source>
</reference>
<proteinExistence type="inferred from homology"/>
<comment type="function">
    <text evidence="1">F(1)F(0) ATP synthase produces ATP from ADP in the presence of a proton or sodium gradient. F-type ATPases consist of two structural domains, F(1) containing the extramembraneous catalytic core and F(0) containing the membrane proton channel, linked together by a central stalk and a peripheral stalk. During catalysis, ATP synthesis in the catalytic domain of F(1) is coupled via a rotary mechanism of the central stalk subunits to proton translocation.</text>
</comment>
<comment type="function">
    <text evidence="1">This protein is part of the stalk that links CF(0) to CF(1). It either transmits conformational changes from CF(0) to CF(1) or is implicated in proton conduction.</text>
</comment>
<comment type="subunit">
    <text evidence="1">F-type ATPases have 2 components, F(1) - the catalytic core - and F(0) - the membrane proton channel. F(1) has five subunits: alpha(3), beta(3), gamma(1), delta(1), epsilon(1). F(0) has three main subunits: a(1), b(2) and c(10-14). The alpha and beta chains form an alternating ring which encloses part of the gamma chain. F(1) is attached to F(0) by a central stalk formed by the gamma and epsilon chains, while a peripheral stalk is formed by the delta and b chains.</text>
</comment>
<comment type="subcellular location">
    <subcellularLocation>
        <location evidence="1">Cell inner membrane</location>
        <topology evidence="1">Peripheral membrane protein</topology>
    </subcellularLocation>
</comment>
<comment type="similarity">
    <text evidence="1">Belongs to the ATPase delta chain family.</text>
</comment>
<accession>Q64UA5</accession>
<organism>
    <name type="scientific">Bacteroides fragilis (strain YCH46)</name>
    <dbReference type="NCBI Taxonomy" id="295405"/>
    <lineage>
        <taxon>Bacteria</taxon>
        <taxon>Pseudomonadati</taxon>
        <taxon>Bacteroidota</taxon>
        <taxon>Bacteroidia</taxon>
        <taxon>Bacteroidales</taxon>
        <taxon>Bacteroidaceae</taxon>
        <taxon>Bacteroides</taxon>
    </lineage>
</organism>
<feature type="chain" id="PRO_1000184655" description="ATP synthase subunit delta">
    <location>
        <begin position="1"/>
        <end position="186"/>
    </location>
</feature>
<protein>
    <recommendedName>
        <fullName evidence="1">ATP synthase subunit delta</fullName>
    </recommendedName>
    <alternativeName>
        <fullName evidence="1">ATP synthase F(1) sector subunit delta</fullName>
    </alternativeName>
    <alternativeName>
        <fullName evidence="1">F-type ATPase subunit delta</fullName>
        <shortName evidence="1">F-ATPase subunit delta</shortName>
    </alternativeName>
</protein>
<gene>
    <name evidence="1" type="primary">atpH</name>
    <name type="ordered locus">BF2177</name>
</gene>
<evidence type="ECO:0000255" key="1">
    <source>
        <dbReference type="HAMAP-Rule" id="MF_01416"/>
    </source>
</evidence>
<dbReference type="EMBL" id="AP006841">
    <property type="protein sequence ID" value="BAD48924.1"/>
    <property type="molecule type" value="Genomic_DNA"/>
</dbReference>
<dbReference type="RefSeq" id="WP_008768717.1">
    <property type="nucleotide sequence ID" value="NZ_UYXF01000015.1"/>
</dbReference>
<dbReference type="RefSeq" id="YP_099458.1">
    <property type="nucleotide sequence ID" value="NC_006347.1"/>
</dbReference>
<dbReference type="SMR" id="Q64UA5"/>
<dbReference type="STRING" id="295405.BF2177"/>
<dbReference type="KEGG" id="bfr:BF2177"/>
<dbReference type="PATRIC" id="fig|295405.11.peg.2114"/>
<dbReference type="HOGENOM" id="CLU_085114_4_0_10"/>
<dbReference type="OrthoDB" id="9802471at2"/>
<dbReference type="Proteomes" id="UP000002197">
    <property type="component" value="Chromosome"/>
</dbReference>
<dbReference type="GO" id="GO:0005886">
    <property type="term" value="C:plasma membrane"/>
    <property type="evidence" value="ECO:0007669"/>
    <property type="project" value="UniProtKB-SubCell"/>
</dbReference>
<dbReference type="GO" id="GO:0045259">
    <property type="term" value="C:proton-transporting ATP synthase complex"/>
    <property type="evidence" value="ECO:0007669"/>
    <property type="project" value="UniProtKB-KW"/>
</dbReference>
<dbReference type="GO" id="GO:0046933">
    <property type="term" value="F:proton-transporting ATP synthase activity, rotational mechanism"/>
    <property type="evidence" value="ECO:0007669"/>
    <property type="project" value="UniProtKB-UniRule"/>
</dbReference>
<dbReference type="Gene3D" id="1.10.520.20">
    <property type="entry name" value="N-terminal domain of the delta subunit of the F1F0-ATP synthase"/>
    <property type="match status" value="1"/>
</dbReference>
<dbReference type="HAMAP" id="MF_01416">
    <property type="entry name" value="ATP_synth_delta_bact"/>
    <property type="match status" value="1"/>
</dbReference>
<dbReference type="InterPro" id="IPR026015">
    <property type="entry name" value="ATP_synth_OSCP/delta_N_sf"/>
</dbReference>
<dbReference type="InterPro" id="IPR000711">
    <property type="entry name" value="ATPase_OSCP/dsu"/>
</dbReference>
<dbReference type="NCBIfam" id="TIGR01145">
    <property type="entry name" value="ATP_synt_delta"/>
    <property type="match status" value="1"/>
</dbReference>
<dbReference type="NCBIfam" id="NF009964">
    <property type="entry name" value="PRK13429.1-3"/>
    <property type="match status" value="1"/>
</dbReference>
<dbReference type="PANTHER" id="PTHR11910">
    <property type="entry name" value="ATP SYNTHASE DELTA CHAIN"/>
    <property type="match status" value="1"/>
</dbReference>
<dbReference type="Pfam" id="PF00213">
    <property type="entry name" value="OSCP"/>
    <property type="match status" value="1"/>
</dbReference>
<dbReference type="PRINTS" id="PR00125">
    <property type="entry name" value="ATPASEDELTA"/>
</dbReference>
<dbReference type="SUPFAM" id="SSF47928">
    <property type="entry name" value="N-terminal domain of the delta subunit of the F1F0-ATP synthase"/>
    <property type="match status" value="1"/>
</dbReference>
<sequence length="186" mass="21483">MEVGIISMRYAKALMAYAEERGAEERLYHELVTLAHSFRTVKGFCAVLDNPIVSVNEKFNLICTAADGDHKPSEEFIRFIRLVLKERRETYLQFMSLMYLDLYRKKKHIGVGKLITAVPVDKATEERIRQTAAHILHAYMELETVVDPSIEGGFVFDINDYRLDASIATQLKKVKQQFIDKNRRIV</sequence>